<name>COQ7_FRATT</name>
<proteinExistence type="inferred from homology"/>
<protein>
    <recommendedName>
        <fullName evidence="1">3-demethoxyubiquinol 3-hydroxylase</fullName>
        <shortName evidence="1">DMQ hydroxylase</shortName>
        <ecNumber evidence="1">1.14.99.60</ecNumber>
    </recommendedName>
    <alternativeName>
        <fullName evidence="1">2-nonaprenyl-3-methyl-6-methoxy-1,4-benzoquinol hydroxylase</fullName>
    </alternativeName>
</protein>
<gene>
    <name evidence="1" type="primary">coq7</name>
    <name type="ordered locus">FTT_0537</name>
</gene>
<reference key="1">
    <citation type="journal article" date="2005" name="Nat. Genet.">
        <title>The complete genome sequence of Francisella tularensis, the causative agent of tularemia.</title>
        <authorList>
            <person name="Larsson P."/>
            <person name="Oyston P.C.F."/>
            <person name="Chain P."/>
            <person name="Chu M.C."/>
            <person name="Duffield M."/>
            <person name="Fuxelius H.-H."/>
            <person name="Garcia E."/>
            <person name="Haelltorp G."/>
            <person name="Johansson D."/>
            <person name="Isherwood K.E."/>
            <person name="Karp P.D."/>
            <person name="Larsson E."/>
            <person name="Liu Y."/>
            <person name="Michell S."/>
            <person name="Prior J."/>
            <person name="Prior R."/>
            <person name="Malfatti S."/>
            <person name="Sjoestedt A."/>
            <person name="Svensson K."/>
            <person name="Thompson N."/>
            <person name="Vergez L."/>
            <person name="Wagg J.K."/>
            <person name="Wren B.W."/>
            <person name="Lindler L.E."/>
            <person name="Andersson S.G.E."/>
            <person name="Forsman M."/>
            <person name="Titball R.W."/>
        </authorList>
    </citation>
    <scope>NUCLEOTIDE SEQUENCE [LARGE SCALE GENOMIC DNA]</scope>
    <source>
        <strain>SCHU S4 / Schu 4</strain>
    </source>
</reference>
<sequence length="211" mass="23756">MRKLSFLDRVIEELDSYARFTKVPLNPSKKSPSSDTIDGKLSEIEKKHSAGLMRVDYTGEICAQGLYRGQASVAKSPQTKEHLYHAAAEEYDHLAWCGERLQELGARPSLLNPFWYWTSFGIGAVAGSISDSLSYGFVVETEKQVMKHLDSHLKSLPVNDNRSREILKQMYIDESEHAVEAEKAGGKKLPKTVKAIMKLQSKVMTTLAYRF</sequence>
<comment type="function">
    <text evidence="1">Catalyzes the hydroxylation of 2-nonaprenyl-3-methyl-6-methoxy-1,4-benzoquinol during ubiquinone biosynthesis.</text>
</comment>
<comment type="catalytic activity">
    <reaction evidence="1">
        <text>a 5-methoxy-2-methyl-3-(all-trans-polyprenyl)benzene-1,4-diol + AH2 + O2 = a 3-demethylubiquinol + A + H2O</text>
        <dbReference type="Rhea" id="RHEA:50908"/>
        <dbReference type="Rhea" id="RHEA-COMP:10859"/>
        <dbReference type="Rhea" id="RHEA-COMP:10914"/>
        <dbReference type="ChEBI" id="CHEBI:13193"/>
        <dbReference type="ChEBI" id="CHEBI:15377"/>
        <dbReference type="ChEBI" id="CHEBI:15379"/>
        <dbReference type="ChEBI" id="CHEBI:17499"/>
        <dbReference type="ChEBI" id="CHEBI:84167"/>
        <dbReference type="ChEBI" id="CHEBI:84422"/>
        <dbReference type="EC" id="1.14.99.60"/>
    </reaction>
</comment>
<comment type="cofactor">
    <cofactor evidence="1">
        <name>Fe cation</name>
        <dbReference type="ChEBI" id="CHEBI:24875"/>
    </cofactor>
    <text evidence="1">Binds 2 iron ions per subunit.</text>
</comment>
<comment type="pathway">
    <text evidence="1">Cofactor biosynthesis; ubiquinone biosynthesis.</text>
</comment>
<comment type="subcellular location">
    <subcellularLocation>
        <location evidence="1">Cell membrane</location>
        <topology evidence="1">Peripheral membrane protein</topology>
    </subcellularLocation>
</comment>
<comment type="similarity">
    <text evidence="1">Belongs to the COQ7 family.</text>
</comment>
<accession>Q5NHC6</accession>
<evidence type="ECO:0000255" key="1">
    <source>
        <dbReference type="HAMAP-Rule" id="MF_01658"/>
    </source>
</evidence>
<organism>
    <name type="scientific">Francisella tularensis subsp. tularensis (strain SCHU S4 / Schu 4)</name>
    <dbReference type="NCBI Taxonomy" id="177416"/>
    <lineage>
        <taxon>Bacteria</taxon>
        <taxon>Pseudomonadati</taxon>
        <taxon>Pseudomonadota</taxon>
        <taxon>Gammaproteobacteria</taxon>
        <taxon>Thiotrichales</taxon>
        <taxon>Francisellaceae</taxon>
        <taxon>Francisella</taxon>
    </lineage>
</organism>
<dbReference type="EC" id="1.14.99.60" evidence="1"/>
<dbReference type="EMBL" id="AJ749949">
    <property type="protein sequence ID" value="CAG45170.1"/>
    <property type="molecule type" value="Genomic_DNA"/>
</dbReference>
<dbReference type="RefSeq" id="WP_003018903.1">
    <property type="nucleotide sequence ID" value="NZ_CP010290.1"/>
</dbReference>
<dbReference type="RefSeq" id="YP_169566.1">
    <property type="nucleotide sequence ID" value="NC_006570.2"/>
</dbReference>
<dbReference type="SMR" id="Q5NHC6"/>
<dbReference type="IntAct" id="Q5NHC6">
    <property type="interactions" value="2"/>
</dbReference>
<dbReference type="STRING" id="177416.FTT_0537"/>
<dbReference type="DNASU" id="3191209"/>
<dbReference type="EnsemblBacteria" id="CAG45170">
    <property type="protein sequence ID" value="CAG45170"/>
    <property type="gene ID" value="FTT_0537"/>
</dbReference>
<dbReference type="KEGG" id="ftu:FTT_0537"/>
<dbReference type="eggNOG" id="COG2941">
    <property type="taxonomic scope" value="Bacteria"/>
</dbReference>
<dbReference type="OrthoDB" id="5192789at2"/>
<dbReference type="UniPathway" id="UPA00232"/>
<dbReference type="Proteomes" id="UP000001174">
    <property type="component" value="Chromosome"/>
</dbReference>
<dbReference type="GO" id="GO:0005886">
    <property type="term" value="C:plasma membrane"/>
    <property type="evidence" value="ECO:0007669"/>
    <property type="project" value="UniProtKB-SubCell"/>
</dbReference>
<dbReference type="GO" id="GO:0008682">
    <property type="term" value="F:3-demethoxyubiquinol 3-hydroxylase activity"/>
    <property type="evidence" value="ECO:0007669"/>
    <property type="project" value="UniProtKB-EC"/>
</dbReference>
<dbReference type="GO" id="GO:0046872">
    <property type="term" value="F:metal ion binding"/>
    <property type="evidence" value="ECO:0007669"/>
    <property type="project" value="UniProtKB-KW"/>
</dbReference>
<dbReference type="GO" id="GO:0006744">
    <property type="term" value="P:ubiquinone biosynthetic process"/>
    <property type="evidence" value="ECO:0007669"/>
    <property type="project" value="UniProtKB-UniRule"/>
</dbReference>
<dbReference type="CDD" id="cd01042">
    <property type="entry name" value="DMQH"/>
    <property type="match status" value="1"/>
</dbReference>
<dbReference type="Gene3D" id="1.20.1260.10">
    <property type="match status" value="1"/>
</dbReference>
<dbReference type="HAMAP" id="MF_01658">
    <property type="entry name" value="COQ7"/>
    <property type="match status" value="1"/>
</dbReference>
<dbReference type="InterPro" id="IPR047809">
    <property type="entry name" value="COQ7_proteobact"/>
</dbReference>
<dbReference type="InterPro" id="IPR012347">
    <property type="entry name" value="Ferritin-like"/>
</dbReference>
<dbReference type="InterPro" id="IPR009078">
    <property type="entry name" value="Ferritin-like_SF"/>
</dbReference>
<dbReference type="InterPro" id="IPR011566">
    <property type="entry name" value="Ubq_synth_Coq7"/>
</dbReference>
<dbReference type="NCBIfam" id="NF033656">
    <property type="entry name" value="DMQ_monoox_COQ7"/>
    <property type="match status" value="1"/>
</dbReference>
<dbReference type="PANTHER" id="PTHR11237:SF4">
    <property type="entry name" value="5-DEMETHOXYUBIQUINONE HYDROXYLASE, MITOCHONDRIAL"/>
    <property type="match status" value="1"/>
</dbReference>
<dbReference type="PANTHER" id="PTHR11237">
    <property type="entry name" value="COENZYME Q10 BIOSYNTHESIS PROTEIN 7"/>
    <property type="match status" value="1"/>
</dbReference>
<dbReference type="Pfam" id="PF03232">
    <property type="entry name" value="COQ7"/>
    <property type="match status" value="1"/>
</dbReference>
<dbReference type="SUPFAM" id="SSF47240">
    <property type="entry name" value="Ferritin-like"/>
    <property type="match status" value="1"/>
</dbReference>
<keyword id="KW-1003">Cell membrane</keyword>
<keyword id="KW-0408">Iron</keyword>
<keyword id="KW-0472">Membrane</keyword>
<keyword id="KW-0479">Metal-binding</keyword>
<keyword id="KW-0503">Monooxygenase</keyword>
<keyword id="KW-0560">Oxidoreductase</keyword>
<keyword id="KW-1185">Reference proteome</keyword>
<keyword id="KW-0831">Ubiquinone biosynthesis</keyword>
<feature type="chain" id="PRO_0000338688" description="3-demethoxyubiquinol 3-hydroxylase">
    <location>
        <begin position="1"/>
        <end position="211"/>
    </location>
</feature>
<feature type="binding site" evidence="1">
    <location>
        <position position="60"/>
    </location>
    <ligand>
        <name>Fe cation</name>
        <dbReference type="ChEBI" id="CHEBI:24875"/>
        <label>1</label>
    </ligand>
</feature>
<feature type="binding site" evidence="1">
    <location>
        <position position="90"/>
    </location>
    <ligand>
        <name>Fe cation</name>
        <dbReference type="ChEBI" id="CHEBI:24875"/>
        <label>1</label>
    </ligand>
</feature>
<feature type="binding site" evidence="1">
    <location>
        <position position="90"/>
    </location>
    <ligand>
        <name>Fe cation</name>
        <dbReference type="ChEBI" id="CHEBI:24875"/>
        <label>2</label>
    </ligand>
</feature>
<feature type="binding site" evidence="1">
    <location>
        <position position="93"/>
    </location>
    <ligand>
        <name>Fe cation</name>
        <dbReference type="ChEBI" id="CHEBI:24875"/>
        <label>1</label>
    </ligand>
</feature>
<feature type="binding site" evidence="1">
    <location>
        <position position="142"/>
    </location>
    <ligand>
        <name>Fe cation</name>
        <dbReference type="ChEBI" id="CHEBI:24875"/>
        <label>2</label>
    </ligand>
</feature>
<feature type="binding site" evidence="1">
    <location>
        <position position="174"/>
    </location>
    <ligand>
        <name>Fe cation</name>
        <dbReference type="ChEBI" id="CHEBI:24875"/>
        <label>1</label>
    </ligand>
</feature>
<feature type="binding site" evidence="1">
    <location>
        <position position="174"/>
    </location>
    <ligand>
        <name>Fe cation</name>
        <dbReference type="ChEBI" id="CHEBI:24875"/>
        <label>2</label>
    </ligand>
</feature>
<feature type="binding site" evidence="1">
    <location>
        <position position="177"/>
    </location>
    <ligand>
        <name>Fe cation</name>
        <dbReference type="ChEBI" id="CHEBI:24875"/>
        <label>2</label>
    </ligand>
</feature>